<feature type="chain" id="PRO_0000154124" description="Anthranilate synthase component 1 3">
    <location>
        <begin position="1"/>
        <end position="503"/>
    </location>
</feature>
<feature type="binding site" evidence="2">
    <location>
        <begin position="269"/>
        <end position="271"/>
    </location>
    <ligand>
        <name>L-tryptophan</name>
        <dbReference type="ChEBI" id="CHEBI:57912"/>
    </ligand>
</feature>
<feature type="binding site" evidence="2">
    <location>
        <begin position="304"/>
        <end position="305"/>
    </location>
    <ligand>
        <name>chorismate</name>
        <dbReference type="ChEBI" id="CHEBI:29748"/>
    </ligand>
</feature>
<feature type="binding site" evidence="2">
    <location>
        <position position="331"/>
    </location>
    <ligand>
        <name>Mg(2+)</name>
        <dbReference type="ChEBI" id="CHEBI:18420"/>
    </ligand>
</feature>
<feature type="binding site" evidence="2">
    <location>
        <position position="419"/>
    </location>
    <ligand>
        <name>chorismate</name>
        <dbReference type="ChEBI" id="CHEBI:29748"/>
    </ligand>
</feature>
<feature type="binding site" evidence="2">
    <location>
        <position position="439"/>
    </location>
    <ligand>
        <name>chorismate</name>
        <dbReference type="ChEBI" id="CHEBI:29748"/>
    </ligand>
</feature>
<feature type="binding site" evidence="2">
    <location>
        <begin position="453"/>
        <end position="455"/>
    </location>
    <ligand>
        <name>chorismate</name>
        <dbReference type="ChEBI" id="CHEBI:29748"/>
    </ligand>
</feature>
<feature type="binding site" evidence="2">
    <location>
        <position position="455"/>
    </location>
    <ligand>
        <name>chorismate</name>
        <dbReference type="ChEBI" id="CHEBI:29748"/>
    </ligand>
</feature>
<feature type="binding site" evidence="2">
    <location>
        <position position="468"/>
    </location>
    <ligand>
        <name>Mg(2+)</name>
        <dbReference type="ChEBI" id="CHEBI:18420"/>
    </ligand>
</feature>
<proteinExistence type="inferred from homology"/>
<reference key="1">
    <citation type="journal article" date="2004" name="Genome Res.">
        <title>Genome sequence of Haloarcula marismortui: a halophilic archaeon from the Dead Sea.</title>
        <authorList>
            <person name="Baliga N.S."/>
            <person name="Bonneau R."/>
            <person name="Facciotti M.T."/>
            <person name="Pan M."/>
            <person name="Glusman G."/>
            <person name="Deutsch E.W."/>
            <person name="Shannon P."/>
            <person name="Chiu Y."/>
            <person name="Weng R.S."/>
            <person name="Gan R.R."/>
            <person name="Hung P."/>
            <person name="Date S.V."/>
            <person name="Marcotte E."/>
            <person name="Hood L."/>
            <person name="Ng W.V."/>
        </authorList>
    </citation>
    <scope>NUCLEOTIDE SEQUENCE [LARGE SCALE GENOMIC DNA]</scope>
    <source>
        <strain>ATCC 43049 / DSM 3752 / JCM 8966 / VKM B-1809</strain>
    </source>
</reference>
<accession>Q5V631</accession>
<organism>
    <name type="scientific">Haloarcula marismortui (strain ATCC 43049 / DSM 3752 / JCM 8966 / VKM B-1809)</name>
    <name type="common">Halobacterium marismortui</name>
    <dbReference type="NCBI Taxonomy" id="272569"/>
    <lineage>
        <taxon>Archaea</taxon>
        <taxon>Methanobacteriati</taxon>
        <taxon>Methanobacteriota</taxon>
        <taxon>Stenosarchaea group</taxon>
        <taxon>Halobacteria</taxon>
        <taxon>Halobacteriales</taxon>
        <taxon>Haloarculaceae</taxon>
        <taxon>Haloarcula</taxon>
    </lineage>
</organism>
<sequence>MTEIRFSTDKESFIETARAAADGTRVPVEARVTVADPFEAYRRARDENTDGFYLETTGGQSGWGYFGIEPIERVEVSAGATPAQDGGSPSLEAIDDLLDREHLERGDCTVPYPCGAFGWLSYDVARELEDIPETTVSDGLPRLQFGVFDCIAAWEEPHDGNVEIHVTACPTVDGSPESAFERGRTMARELAQDAIHGEKHVQSQPTAASQATFESECGEAAFADRVRQIKQYVRDGDTFQTNVSHRLTAPAAVHPVDTFDAVRRVNPAPYSALLEFPGVDLVSASPELLLDVDGDQLLTEPIAGTRPRGATPSEDEDLEVDLCSDEKERAEHAMLVDLERNDLGKVSEYGSVDVAEYRRVDRYSEVMHLVSLIEGELRDAVSIADAVAAVFPGGTITGAPKPRTMEIIDEVERTRRGPYTGSIGMFGFDDRATLNITIRTLVHYDDEYRLRVGSGIVHDSVPEAEYRETLDKARALVTAVDEALGEQGSFAVESETEPMEGMR</sequence>
<gene>
    <name type="primary">trpE3</name>
    <name type="ordered locus">pNG7327</name>
</gene>
<evidence type="ECO:0000250" key="1"/>
<evidence type="ECO:0000250" key="2">
    <source>
        <dbReference type="UniProtKB" id="P00897"/>
    </source>
</evidence>
<evidence type="ECO:0000305" key="3"/>
<dbReference type="EC" id="4.1.3.27"/>
<dbReference type="EMBL" id="AY596296">
    <property type="protein sequence ID" value="AAV45021.1"/>
    <property type="status" value="ALT_INIT"/>
    <property type="molecule type" value="Genomic_DNA"/>
</dbReference>
<dbReference type="RefSeq" id="WP_049938601.1">
    <property type="nucleotide sequence ID" value="NC_006395.1"/>
</dbReference>
<dbReference type="SMR" id="Q5V631"/>
<dbReference type="EnsemblBacteria" id="AAV45021">
    <property type="protein sequence ID" value="AAV45021"/>
    <property type="gene ID" value="pNG7327"/>
</dbReference>
<dbReference type="GeneID" id="40151225"/>
<dbReference type="KEGG" id="hma:pNG7327"/>
<dbReference type="PATRIC" id="fig|272569.17.peg.753"/>
<dbReference type="HOGENOM" id="CLU_006493_9_3_2"/>
<dbReference type="UniPathway" id="UPA00035">
    <property type="reaction ID" value="UER00040"/>
</dbReference>
<dbReference type="Proteomes" id="UP000001169">
    <property type="component" value="Plasmid pNG700"/>
</dbReference>
<dbReference type="GO" id="GO:0004049">
    <property type="term" value="F:anthranilate synthase activity"/>
    <property type="evidence" value="ECO:0007669"/>
    <property type="project" value="UniProtKB-EC"/>
</dbReference>
<dbReference type="GO" id="GO:0046872">
    <property type="term" value="F:metal ion binding"/>
    <property type="evidence" value="ECO:0007669"/>
    <property type="project" value="UniProtKB-KW"/>
</dbReference>
<dbReference type="GO" id="GO:0000162">
    <property type="term" value="P:L-tryptophan biosynthetic process"/>
    <property type="evidence" value="ECO:0007669"/>
    <property type="project" value="UniProtKB-UniPathway"/>
</dbReference>
<dbReference type="Gene3D" id="3.60.120.10">
    <property type="entry name" value="Anthranilate synthase"/>
    <property type="match status" value="1"/>
</dbReference>
<dbReference type="InterPro" id="IPR005801">
    <property type="entry name" value="ADC_synthase"/>
</dbReference>
<dbReference type="InterPro" id="IPR019999">
    <property type="entry name" value="Anth_synth_I-like"/>
</dbReference>
<dbReference type="InterPro" id="IPR006805">
    <property type="entry name" value="Anth_synth_I_N"/>
</dbReference>
<dbReference type="InterPro" id="IPR015890">
    <property type="entry name" value="Chorismate_C"/>
</dbReference>
<dbReference type="PANTHER" id="PTHR11236">
    <property type="entry name" value="AMINOBENZOATE/ANTHRANILATE SYNTHASE"/>
    <property type="match status" value="1"/>
</dbReference>
<dbReference type="PANTHER" id="PTHR11236:SF9">
    <property type="entry name" value="ANTHRANILATE SYNTHASE COMPONENT 1"/>
    <property type="match status" value="1"/>
</dbReference>
<dbReference type="Pfam" id="PF04715">
    <property type="entry name" value="Anth_synt_I_N"/>
    <property type="match status" value="1"/>
</dbReference>
<dbReference type="Pfam" id="PF00425">
    <property type="entry name" value="Chorismate_bind"/>
    <property type="match status" value="1"/>
</dbReference>
<dbReference type="PRINTS" id="PR00095">
    <property type="entry name" value="ANTSNTHASEI"/>
</dbReference>
<dbReference type="SUPFAM" id="SSF56322">
    <property type="entry name" value="ADC synthase"/>
    <property type="match status" value="1"/>
</dbReference>
<name>TRPE3_HALMA</name>
<geneLocation type="plasmid">
    <name>pNG700</name>
</geneLocation>
<keyword id="KW-0028">Amino-acid biosynthesis</keyword>
<keyword id="KW-0057">Aromatic amino acid biosynthesis</keyword>
<keyword id="KW-0456">Lyase</keyword>
<keyword id="KW-0460">Magnesium</keyword>
<keyword id="KW-0479">Metal-binding</keyword>
<keyword id="KW-0614">Plasmid</keyword>
<keyword id="KW-1185">Reference proteome</keyword>
<keyword id="KW-0822">Tryptophan biosynthesis</keyword>
<comment type="catalytic activity">
    <reaction>
        <text>chorismate + L-glutamine = anthranilate + pyruvate + L-glutamate + H(+)</text>
        <dbReference type="Rhea" id="RHEA:21732"/>
        <dbReference type="ChEBI" id="CHEBI:15361"/>
        <dbReference type="ChEBI" id="CHEBI:15378"/>
        <dbReference type="ChEBI" id="CHEBI:16567"/>
        <dbReference type="ChEBI" id="CHEBI:29748"/>
        <dbReference type="ChEBI" id="CHEBI:29985"/>
        <dbReference type="ChEBI" id="CHEBI:58359"/>
        <dbReference type="EC" id="4.1.3.27"/>
    </reaction>
</comment>
<comment type="cofactor">
    <cofactor evidence="2">
        <name>Mg(2+)</name>
        <dbReference type="ChEBI" id="CHEBI:18420"/>
    </cofactor>
    <text evidence="2">Binds 1 Mg(2+) ion per subunit.</text>
</comment>
<comment type="pathway">
    <text>Amino-acid biosynthesis; L-tryptophan biosynthesis; L-tryptophan from chorismate: step 1/5.</text>
</comment>
<comment type="subunit">
    <text evidence="1">Tetramer of two components I and two components II.</text>
</comment>
<comment type="miscellaneous">
    <text>Component I catalyzes the formation of anthranilate using ammonia rather than glutamine, whereas component II provides glutamine amidotransferase activity.</text>
</comment>
<comment type="similarity">
    <text evidence="3">Belongs to the anthranilate synthase component I family.</text>
</comment>
<comment type="sequence caution" evidence="3">
    <conflict type="erroneous initiation">
        <sequence resource="EMBL-CDS" id="AAV45021"/>
    </conflict>
</comment>
<protein>
    <recommendedName>
        <fullName>Anthranilate synthase component 1 3</fullName>
        <ecNumber>4.1.3.27</ecNumber>
    </recommendedName>
    <alternativeName>
        <fullName>Anthranilate synthase component I 3</fullName>
    </alternativeName>
</protein>